<gene>
    <name evidence="1" type="primary">grpE</name>
    <name type="ordered locus">Cgl2799</name>
    <name type="ordered locus">cg3099</name>
</gene>
<dbReference type="EMBL" id="BA000036">
    <property type="protein sequence ID" value="BAC00193.1"/>
    <property type="status" value="ALT_INIT"/>
    <property type="molecule type" value="Genomic_DNA"/>
</dbReference>
<dbReference type="EMBL" id="BX927156">
    <property type="protein sequence ID" value="CAF20820.1"/>
    <property type="molecule type" value="Genomic_DNA"/>
</dbReference>
<dbReference type="RefSeq" id="NP_601991.1">
    <property type="nucleotide sequence ID" value="NC_003450.3"/>
</dbReference>
<dbReference type="RefSeq" id="WP_011015389.1">
    <property type="nucleotide sequence ID" value="NC_006958.1"/>
</dbReference>
<dbReference type="SMR" id="Q6M259"/>
<dbReference type="STRING" id="196627.cg3099"/>
<dbReference type="GeneID" id="1020742"/>
<dbReference type="KEGG" id="cgb:cg3099"/>
<dbReference type="KEGG" id="cgl:Cgl2799"/>
<dbReference type="PATRIC" id="fig|196627.13.peg.2731"/>
<dbReference type="eggNOG" id="COG0576">
    <property type="taxonomic scope" value="Bacteria"/>
</dbReference>
<dbReference type="HOGENOM" id="CLU_057217_4_0_11"/>
<dbReference type="OrthoDB" id="5191115at2"/>
<dbReference type="BioCyc" id="CORYNE:G18NG-12416-MONOMER"/>
<dbReference type="Proteomes" id="UP000000582">
    <property type="component" value="Chromosome"/>
</dbReference>
<dbReference type="Proteomes" id="UP000001009">
    <property type="component" value="Chromosome"/>
</dbReference>
<dbReference type="GO" id="GO:0005737">
    <property type="term" value="C:cytoplasm"/>
    <property type="evidence" value="ECO:0007669"/>
    <property type="project" value="UniProtKB-SubCell"/>
</dbReference>
<dbReference type="GO" id="GO:0000774">
    <property type="term" value="F:adenyl-nucleotide exchange factor activity"/>
    <property type="evidence" value="ECO:0007669"/>
    <property type="project" value="InterPro"/>
</dbReference>
<dbReference type="GO" id="GO:0042803">
    <property type="term" value="F:protein homodimerization activity"/>
    <property type="evidence" value="ECO:0007669"/>
    <property type="project" value="InterPro"/>
</dbReference>
<dbReference type="GO" id="GO:0051087">
    <property type="term" value="F:protein-folding chaperone binding"/>
    <property type="evidence" value="ECO:0007669"/>
    <property type="project" value="InterPro"/>
</dbReference>
<dbReference type="GO" id="GO:0051082">
    <property type="term" value="F:unfolded protein binding"/>
    <property type="evidence" value="ECO:0007669"/>
    <property type="project" value="TreeGrafter"/>
</dbReference>
<dbReference type="GO" id="GO:0006457">
    <property type="term" value="P:protein folding"/>
    <property type="evidence" value="ECO:0007669"/>
    <property type="project" value="InterPro"/>
</dbReference>
<dbReference type="CDD" id="cd00446">
    <property type="entry name" value="GrpE"/>
    <property type="match status" value="1"/>
</dbReference>
<dbReference type="Gene3D" id="3.90.20.20">
    <property type="match status" value="1"/>
</dbReference>
<dbReference type="Gene3D" id="2.30.22.10">
    <property type="entry name" value="Head domain of nucleotide exchange factor GrpE"/>
    <property type="match status" value="1"/>
</dbReference>
<dbReference type="HAMAP" id="MF_01151">
    <property type="entry name" value="GrpE"/>
    <property type="match status" value="1"/>
</dbReference>
<dbReference type="InterPro" id="IPR000740">
    <property type="entry name" value="GrpE"/>
</dbReference>
<dbReference type="InterPro" id="IPR013805">
    <property type="entry name" value="GrpE_coiled_coil"/>
</dbReference>
<dbReference type="InterPro" id="IPR009012">
    <property type="entry name" value="GrpE_head"/>
</dbReference>
<dbReference type="NCBIfam" id="NF010761">
    <property type="entry name" value="PRK14164.1"/>
    <property type="match status" value="1"/>
</dbReference>
<dbReference type="PANTHER" id="PTHR21237">
    <property type="entry name" value="GRPE PROTEIN"/>
    <property type="match status" value="1"/>
</dbReference>
<dbReference type="PANTHER" id="PTHR21237:SF23">
    <property type="entry name" value="GRPE PROTEIN HOMOLOG, MITOCHONDRIAL"/>
    <property type="match status" value="1"/>
</dbReference>
<dbReference type="Pfam" id="PF01025">
    <property type="entry name" value="GrpE"/>
    <property type="match status" value="1"/>
</dbReference>
<dbReference type="PRINTS" id="PR00773">
    <property type="entry name" value="GRPEPROTEIN"/>
</dbReference>
<dbReference type="SUPFAM" id="SSF58014">
    <property type="entry name" value="Coiled-coil domain of nucleotide exchange factor GrpE"/>
    <property type="match status" value="1"/>
</dbReference>
<dbReference type="SUPFAM" id="SSF51064">
    <property type="entry name" value="Head domain of nucleotide exchange factor GrpE"/>
    <property type="match status" value="1"/>
</dbReference>
<dbReference type="PROSITE" id="PS01071">
    <property type="entry name" value="GRPE"/>
    <property type="match status" value="1"/>
</dbReference>
<proteinExistence type="inferred from homology"/>
<feature type="chain" id="PRO_0000113778" description="Protein GrpE">
    <location>
        <begin position="1"/>
        <end position="218"/>
    </location>
</feature>
<feature type="region of interest" description="Disordered" evidence="2">
    <location>
        <begin position="1"/>
        <end position="75"/>
    </location>
</feature>
<feature type="compositionally biased region" description="Basic and acidic residues" evidence="2">
    <location>
        <begin position="23"/>
        <end position="40"/>
    </location>
</feature>
<feature type="compositionally biased region" description="Acidic residues" evidence="2">
    <location>
        <begin position="48"/>
        <end position="75"/>
    </location>
</feature>
<evidence type="ECO:0000255" key="1">
    <source>
        <dbReference type="HAMAP-Rule" id="MF_01151"/>
    </source>
</evidence>
<evidence type="ECO:0000256" key="2">
    <source>
        <dbReference type="SAM" id="MobiDB-lite"/>
    </source>
</evidence>
<evidence type="ECO:0000305" key="3"/>
<reference key="1">
    <citation type="journal article" date="2003" name="Appl. Microbiol. Biotechnol.">
        <title>The Corynebacterium glutamicum genome: features and impacts on biotechnological processes.</title>
        <authorList>
            <person name="Ikeda M."/>
            <person name="Nakagawa S."/>
        </authorList>
    </citation>
    <scope>NUCLEOTIDE SEQUENCE [LARGE SCALE GENOMIC DNA]</scope>
    <source>
        <strain>ATCC 13032 / DSM 20300 / JCM 1318 / BCRC 11384 / CCUG 27702 / LMG 3730 / NBRC 12168 / NCIMB 10025 / NRRL B-2784 / 534</strain>
    </source>
</reference>
<reference key="2">
    <citation type="journal article" date="2003" name="J. Biotechnol.">
        <title>The complete Corynebacterium glutamicum ATCC 13032 genome sequence and its impact on the production of L-aspartate-derived amino acids and vitamins.</title>
        <authorList>
            <person name="Kalinowski J."/>
            <person name="Bathe B."/>
            <person name="Bartels D."/>
            <person name="Bischoff N."/>
            <person name="Bott M."/>
            <person name="Burkovski A."/>
            <person name="Dusch N."/>
            <person name="Eggeling L."/>
            <person name="Eikmanns B.J."/>
            <person name="Gaigalat L."/>
            <person name="Goesmann A."/>
            <person name="Hartmann M."/>
            <person name="Huthmacher K."/>
            <person name="Kraemer R."/>
            <person name="Linke B."/>
            <person name="McHardy A.C."/>
            <person name="Meyer F."/>
            <person name="Moeckel B."/>
            <person name="Pfefferle W."/>
            <person name="Puehler A."/>
            <person name="Rey D.A."/>
            <person name="Rueckert C."/>
            <person name="Rupp O."/>
            <person name="Sahm H."/>
            <person name="Wendisch V.F."/>
            <person name="Wiegraebe I."/>
            <person name="Tauch A."/>
        </authorList>
    </citation>
    <scope>NUCLEOTIDE SEQUENCE [LARGE SCALE GENOMIC DNA]</scope>
    <source>
        <strain>ATCC 13032 / DSM 20300 / JCM 1318 / BCRC 11384 / CCUG 27702 / LMG 3730 / NBRC 12168 / NCIMB 10025 / NRRL B-2784 / 534</strain>
    </source>
</reference>
<sequence length="218" mass="23680">MTTPNGMPDNPGDPENTDPEATSADRAEQAAEEAAARQAEESPFGQASEEEISPELEAEINDLLSDVDPDLDGDGEVSAVETQLAERTEDLQRVTAEYANYRRRTERERQGIIDTARAGVVTQLLPLLDDLDLAEQHGDLNEGPLKSLSDKLINILGGLKVESFGEIGEAFDPEIHEAVQDLSQGDVKVLGTVLRKGYRLGDRVIRTAMVLIGDPEES</sequence>
<keyword id="KW-0143">Chaperone</keyword>
<keyword id="KW-0963">Cytoplasm</keyword>
<keyword id="KW-1185">Reference proteome</keyword>
<keyword id="KW-0346">Stress response</keyword>
<comment type="function">
    <text evidence="1">Participates actively in the response to hyperosmotic and heat shock by preventing the aggregation of stress-denatured proteins, in association with DnaK and GrpE. It is the nucleotide exchange factor for DnaK and may function as a thermosensor. Unfolded proteins bind initially to DnaJ; upon interaction with the DnaJ-bound protein, DnaK hydrolyzes its bound ATP, resulting in the formation of a stable complex. GrpE releases ADP from DnaK; ATP binding to DnaK triggers the release of the substrate protein, thus completing the reaction cycle. Several rounds of ATP-dependent interactions between DnaJ, DnaK and GrpE are required for fully efficient folding.</text>
</comment>
<comment type="subunit">
    <text evidence="1">Homodimer.</text>
</comment>
<comment type="subcellular location">
    <subcellularLocation>
        <location evidence="1">Cytoplasm</location>
    </subcellularLocation>
</comment>
<comment type="similarity">
    <text evidence="1">Belongs to the GrpE family.</text>
</comment>
<comment type="sequence caution" evidence="3">
    <conflict type="erroneous initiation">
        <sequence resource="EMBL-CDS" id="BAC00193"/>
    </conflict>
</comment>
<name>GRPE_CORGL</name>
<accession>Q6M259</accession>
<accession>Q8NLY7</accession>
<organism>
    <name type="scientific">Corynebacterium glutamicum (strain ATCC 13032 / DSM 20300 / JCM 1318 / BCRC 11384 / CCUG 27702 / LMG 3730 / NBRC 12168 / NCIMB 10025 / NRRL B-2784 / 534)</name>
    <dbReference type="NCBI Taxonomy" id="196627"/>
    <lineage>
        <taxon>Bacteria</taxon>
        <taxon>Bacillati</taxon>
        <taxon>Actinomycetota</taxon>
        <taxon>Actinomycetes</taxon>
        <taxon>Mycobacteriales</taxon>
        <taxon>Corynebacteriaceae</taxon>
        <taxon>Corynebacterium</taxon>
    </lineage>
</organism>
<protein>
    <recommendedName>
        <fullName evidence="1">Protein GrpE</fullName>
    </recommendedName>
    <alternativeName>
        <fullName evidence="1">HSP-70 cofactor</fullName>
    </alternativeName>
</protein>